<organism>
    <name type="scientific">Bacteroides fragilis (strain YCH46)</name>
    <dbReference type="NCBI Taxonomy" id="295405"/>
    <lineage>
        <taxon>Bacteria</taxon>
        <taxon>Pseudomonadati</taxon>
        <taxon>Bacteroidota</taxon>
        <taxon>Bacteroidia</taxon>
        <taxon>Bacteroidales</taxon>
        <taxon>Bacteroidaceae</taxon>
        <taxon>Bacteroides</taxon>
    </lineage>
</organism>
<name>TRPA_BACFR</name>
<feature type="chain" id="PRO_0000098737" description="Tryptophan synthase alpha chain">
    <location>
        <begin position="1"/>
        <end position="263"/>
    </location>
</feature>
<feature type="active site" description="Proton acceptor" evidence="1">
    <location>
        <position position="46"/>
    </location>
</feature>
<feature type="active site" description="Proton acceptor" evidence="1">
    <location>
        <position position="57"/>
    </location>
</feature>
<proteinExistence type="inferred from homology"/>
<reference key="1">
    <citation type="journal article" date="2004" name="Proc. Natl. Acad. Sci. U.S.A.">
        <title>Genomic analysis of Bacteroides fragilis reveals extensive DNA inversions regulating cell surface adaptation.</title>
        <authorList>
            <person name="Kuwahara T."/>
            <person name="Yamashita A."/>
            <person name="Hirakawa H."/>
            <person name="Nakayama H."/>
            <person name="Toh H."/>
            <person name="Okada N."/>
            <person name="Kuhara S."/>
            <person name="Hattori M."/>
            <person name="Hayashi T."/>
            <person name="Ohnishi Y."/>
        </authorList>
    </citation>
    <scope>NUCLEOTIDE SEQUENCE [LARGE SCALE GENOMIC DNA]</scope>
    <source>
        <strain>YCH46</strain>
    </source>
</reference>
<accession>Q64SX3</accession>
<keyword id="KW-0028">Amino-acid biosynthesis</keyword>
<keyword id="KW-0057">Aromatic amino acid biosynthesis</keyword>
<keyword id="KW-0456">Lyase</keyword>
<keyword id="KW-0822">Tryptophan biosynthesis</keyword>
<gene>
    <name evidence="1" type="primary">trpA</name>
    <name type="ordered locus">BF2656</name>
</gene>
<protein>
    <recommendedName>
        <fullName evidence="1">Tryptophan synthase alpha chain</fullName>
        <ecNumber evidence="1">4.2.1.20</ecNumber>
    </recommendedName>
</protein>
<dbReference type="EC" id="4.2.1.20" evidence="1"/>
<dbReference type="EMBL" id="AP006841">
    <property type="protein sequence ID" value="BAD49406.1"/>
    <property type="molecule type" value="Genomic_DNA"/>
</dbReference>
<dbReference type="RefSeq" id="WP_005788291.1">
    <property type="nucleotide sequence ID" value="NZ_UYXF01000003.1"/>
</dbReference>
<dbReference type="RefSeq" id="YP_099940.1">
    <property type="nucleotide sequence ID" value="NC_006347.1"/>
</dbReference>
<dbReference type="SMR" id="Q64SX3"/>
<dbReference type="STRING" id="295405.BF2656"/>
<dbReference type="GeneID" id="60366805"/>
<dbReference type="KEGG" id="bfr:BF2656"/>
<dbReference type="PATRIC" id="fig|295405.11.peg.2568"/>
<dbReference type="HOGENOM" id="CLU_016734_0_0_10"/>
<dbReference type="OrthoDB" id="9804578at2"/>
<dbReference type="UniPathway" id="UPA00035">
    <property type="reaction ID" value="UER00044"/>
</dbReference>
<dbReference type="Proteomes" id="UP000002197">
    <property type="component" value="Chromosome"/>
</dbReference>
<dbReference type="GO" id="GO:0005829">
    <property type="term" value="C:cytosol"/>
    <property type="evidence" value="ECO:0007669"/>
    <property type="project" value="TreeGrafter"/>
</dbReference>
<dbReference type="GO" id="GO:0004834">
    <property type="term" value="F:tryptophan synthase activity"/>
    <property type="evidence" value="ECO:0007669"/>
    <property type="project" value="UniProtKB-UniRule"/>
</dbReference>
<dbReference type="CDD" id="cd04724">
    <property type="entry name" value="Tryptophan_synthase_alpha"/>
    <property type="match status" value="1"/>
</dbReference>
<dbReference type="FunFam" id="3.20.20.70:FF:000037">
    <property type="entry name" value="Tryptophan synthase alpha chain"/>
    <property type="match status" value="1"/>
</dbReference>
<dbReference type="Gene3D" id="3.20.20.70">
    <property type="entry name" value="Aldolase class I"/>
    <property type="match status" value="1"/>
</dbReference>
<dbReference type="HAMAP" id="MF_00131">
    <property type="entry name" value="Trp_synth_alpha"/>
    <property type="match status" value="1"/>
</dbReference>
<dbReference type="InterPro" id="IPR013785">
    <property type="entry name" value="Aldolase_TIM"/>
</dbReference>
<dbReference type="InterPro" id="IPR011060">
    <property type="entry name" value="RibuloseP-bd_barrel"/>
</dbReference>
<dbReference type="InterPro" id="IPR018204">
    <property type="entry name" value="Trp_synthase_alpha_AS"/>
</dbReference>
<dbReference type="InterPro" id="IPR002028">
    <property type="entry name" value="Trp_synthase_suA"/>
</dbReference>
<dbReference type="NCBIfam" id="TIGR00262">
    <property type="entry name" value="trpA"/>
    <property type="match status" value="1"/>
</dbReference>
<dbReference type="PANTHER" id="PTHR43406:SF1">
    <property type="entry name" value="TRYPTOPHAN SYNTHASE ALPHA CHAIN, CHLOROPLASTIC"/>
    <property type="match status" value="1"/>
</dbReference>
<dbReference type="PANTHER" id="PTHR43406">
    <property type="entry name" value="TRYPTOPHAN SYNTHASE, ALPHA CHAIN"/>
    <property type="match status" value="1"/>
</dbReference>
<dbReference type="Pfam" id="PF00290">
    <property type="entry name" value="Trp_syntA"/>
    <property type="match status" value="1"/>
</dbReference>
<dbReference type="SUPFAM" id="SSF51366">
    <property type="entry name" value="Ribulose-phoshate binding barrel"/>
    <property type="match status" value="1"/>
</dbReference>
<dbReference type="PROSITE" id="PS00167">
    <property type="entry name" value="TRP_SYNTHASE_ALPHA"/>
    <property type="match status" value="1"/>
</dbReference>
<evidence type="ECO:0000255" key="1">
    <source>
        <dbReference type="HAMAP-Rule" id="MF_00131"/>
    </source>
</evidence>
<comment type="function">
    <text evidence="1">The alpha subunit is responsible for the aldol cleavage of indoleglycerol phosphate to indole and glyceraldehyde 3-phosphate.</text>
</comment>
<comment type="catalytic activity">
    <reaction evidence="1">
        <text>(1S,2R)-1-C-(indol-3-yl)glycerol 3-phosphate + L-serine = D-glyceraldehyde 3-phosphate + L-tryptophan + H2O</text>
        <dbReference type="Rhea" id="RHEA:10532"/>
        <dbReference type="ChEBI" id="CHEBI:15377"/>
        <dbReference type="ChEBI" id="CHEBI:33384"/>
        <dbReference type="ChEBI" id="CHEBI:57912"/>
        <dbReference type="ChEBI" id="CHEBI:58866"/>
        <dbReference type="ChEBI" id="CHEBI:59776"/>
        <dbReference type="EC" id="4.2.1.20"/>
    </reaction>
</comment>
<comment type="pathway">
    <text evidence="1">Amino-acid biosynthesis; L-tryptophan biosynthesis; L-tryptophan from chorismate: step 5/5.</text>
</comment>
<comment type="subunit">
    <text evidence="1">Tetramer of two alpha and two beta chains.</text>
</comment>
<comment type="similarity">
    <text evidence="1">Belongs to the TrpA family.</text>
</comment>
<sequence length="263" mass="29864">MNRINQLFDSNPRDLLSIYFCAGYPTLEGTTEVIRTLEKHGVNMIEIGIPFSDPMADGMVIQNAATQALRNGMSLRLLFEQLHDIRRDVKIPLILMGYLNPIMQFGFDNFCRQCAECGIDGVIIPDLPFKDYQEHFRTIAERYDVKVIMLITPETSEERVREIDEHTDGFIYMVSSAATTGAQQDFDGQKRAYFKKIEKMNLRNPRMVGFGISNEATFRAACENASGAIIGSRFVTLLHEEKNPEKAITRLKAILNLSSNDLR</sequence>